<feature type="signal peptide" evidence="2">
    <location>
        <begin position="1"/>
        <end position="21"/>
    </location>
</feature>
<feature type="chain" id="PRO_5008180376" description="Berberine bridge enzyme-like 11">
    <location>
        <begin position="22"/>
        <end position="526"/>
    </location>
</feature>
<feature type="domain" description="FAD-binding PCMH-type" evidence="4">
    <location>
        <begin position="72"/>
        <end position="247"/>
    </location>
</feature>
<feature type="glycosylation site" description="N-linked (GlcNAc...) asparagine" evidence="3">
    <location>
        <position position="52"/>
    </location>
</feature>
<feature type="glycosylation site" description="N-linked (GlcNAc...) asparagine" evidence="3">
    <location>
        <position position="136"/>
    </location>
</feature>
<feature type="glycosylation site" description="N-linked (GlcNAc...) asparagine" evidence="3">
    <location>
        <position position="273"/>
    </location>
</feature>
<feature type="glycosylation site" description="N-linked (GlcNAc...) asparagine" evidence="3">
    <location>
        <position position="482"/>
    </location>
</feature>
<feature type="disulfide bond" evidence="1">
    <location>
        <begin position="31"/>
        <end position="94"/>
    </location>
</feature>
<feature type="cross-link" description="6-(S-cysteinyl)-8alpha-(pros-histidyl)-FAD (His-Cys)" evidence="1">
    <location>
        <begin position="109"/>
        <end position="171"/>
    </location>
</feature>
<organism>
    <name type="scientific">Arabidopsis thaliana</name>
    <name type="common">Mouse-ear cress</name>
    <dbReference type="NCBI Taxonomy" id="3702"/>
    <lineage>
        <taxon>Eukaryota</taxon>
        <taxon>Viridiplantae</taxon>
        <taxon>Streptophyta</taxon>
        <taxon>Embryophyta</taxon>
        <taxon>Tracheophyta</taxon>
        <taxon>Spermatophyta</taxon>
        <taxon>Magnoliopsida</taxon>
        <taxon>eudicotyledons</taxon>
        <taxon>Gunneridae</taxon>
        <taxon>Pentapetalae</taxon>
        <taxon>rosids</taxon>
        <taxon>malvids</taxon>
        <taxon>Brassicales</taxon>
        <taxon>Brassicaceae</taxon>
        <taxon>Camelineae</taxon>
        <taxon>Arabidopsis</taxon>
    </lineage>
</organism>
<evidence type="ECO:0000250" key="1">
    <source>
        <dbReference type="UniProtKB" id="O64743"/>
    </source>
</evidence>
<evidence type="ECO:0000255" key="2"/>
<evidence type="ECO:0000255" key="3">
    <source>
        <dbReference type="PROSITE-ProRule" id="PRU00498"/>
    </source>
</evidence>
<evidence type="ECO:0000255" key="4">
    <source>
        <dbReference type="PROSITE-ProRule" id="PRU00718"/>
    </source>
</evidence>
<evidence type="ECO:0000303" key="5">
    <source>
    </source>
</evidence>
<evidence type="ECO:0000305" key="6"/>
<evidence type="ECO:0000312" key="7">
    <source>
        <dbReference type="Araport" id="AT1G30730"/>
    </source>
</evidence>
<evidence type="ECO:0000312" key="8">
    <source>
        <dbReference type="EMBL" id="AAD25760.1"/>
    </source>
</evidence>
<dbReference type="EC" id="1.1.1.-" evidence="1"/>
<dbReference type="EMBL" id="AC007060">
    <property type="protein sequence ID" value="AAD25760.1"/>
    <property type="molecule type" value="Genomic_DNA"/>
</dbReference>
<dbReference type="EMBL" id="CP002684">
    <property type="protein sequence ID" value="AEE31265.1"/>
    <property type="molecule type" value="Genomic_DNA"/>
</dbReference>
<dbReference type="EMBL" id="BT010838">
    <property type="protein sequence ID" value="AAR24205.1"/>
    <property type="status" value="ALT_INIT"/>
    <property type="molecule type" value="mRNA"/>
</dbReference>
<dbReference type="EMBL" id="BT011310">
    <property type="protein sequence ID" value="AAR92346.1"/>
    <property type="molecule type" value="mRNA"/>
</dbReference>
<dbReference type="PIR" id="H86432">
    <property type="entry name" value="H86432"/>
</dbReference>
<dbReference type="RefSeq" id="NP_174360.1">
    <property type="nucleotide sequence ID" value="NM_102809.3"/>
</dbReference>
<dbReference type="SMR" id="Q9SA88"/>
<dbReference type="FunCoup" id="Q9SA88">
    <property type="interactions" value="122"/>
</dbReference>
<dbReference type="IntAct" id="Q9SA88">
    <property type="interactions" value="1"/>
</dbReference>
<dbReference type="STRING" id="3702.Q9SA88"/>
<dbReference type="GlyGen" id="Q9SA88">
    <property type="glycosylation" value="4 sites"/>
</dbReference>
<dbReference type="iPTMnet" id="Q9SA88"/>
<dbReference type="PaxDb" id="3702-AT1G30730.1"/>
<dbReference type="ProteomicsDB" id="240773"/>
<dbReference type="EnsemblPlants" id="AT1G30730.1">
    <property type="protein sequence ID" value="AT1G30730.1"/>
    <property type="gene ID" value="AT1G30730"/>
</dbReference>
<dbReference type="GeneID" id="839953"/>
<dbReference type="Gramene" id="AT1G30730.1">
    <property type="protein sequence ID" value="AT1G30730.1"/>
    <property type="gene ID" value="AT1G30730"/>
</dbReference>
<dbReference type="KEGG" id="ath:AT1G30730"/>
<dbReference type="Araport" id="AT1G30730"/>
<dbReference type="TAIR" id="AT1G30730">
    <property type="gene designation" value="ATBBE11"/>
</dbReference>
<dbReference type="eggNOG" id="ENOG502QVGN">
    <property type="taxonomic scope" value="Eukaryota"/>
</dbReference>
<dbReference type="HOGENOM" id="CLU_018354_6_0_1"/>
<dbReference type="InParanoid" id="Q9SA88"/>
<dbReference type="OMA" id="HTYIMIE"/>
<dbReference type="PhylomeDB" id="Q9SA88"/>
<dbReference type="BioCyc" id="ARA:AT1G30730-MONOMER"/>
<dbReference type="CD-CODE" id="4299E36E">
    <property type="entry name" value="Nucleolus"/>
</dbReference>
<dbReference type="PRO" id="PR:Q9SA88"/>
<dbReference type="Proteomes" id="UP000006548">
    <property type="component" value="Chromosome 1"/>
</dbReference>
<dbReference type="ExpressionAtlas" id="Q9SA88">
    <property type="expression patterns" value="baseline and differential"/>
</dbReference>
<dbReference type="GO" id="GO:0005576">
    <property type="term" value="C:extracellular region"/>
    <property type="evidence" value="ECO:0007669"/>
    <property type="project" value="UniProtKB-KW"/>
</dbReference>
<dbReference type="GO" id="GO:0009505">
    <property type="term" value="C:plant-type cell wall"/>
    <property type="evidence" value="ECO:0000250"/>
    <property type="project" value="UniProtKB"/>
</dbReference>
<dbReference type="GO" id="GO:0071949">
    <property type="term" value="F:FAD binding"/>
    <property type="evidence" value="ECO:0007669"/>
    <property type="project" value="InterPro"/>
</dbReference>
<dbReference type="GO" id="GO:0016491">
    <property type="term" value="F:oxidoreductase activity"/>
    <property type="evidence" value="ECO:0007669"/>
    <property type="project" value="UniProtKB-KW"/>
</dbReference>
<dbReference type="FunFam" id="3.30.43.10:FF:000004">
    <property type="entry name" value="Berberine bridge enzyme-like 15"/>
    <property type="match status" value="1"/>
</dbReference>
<dbReference type="Gene3D" id="3.30.465.10">
    <property type="match status" value="1"/>
</dbReference>
<dbReference type="Gene3D" id="3.40.462.20">
    <property type="match status" value="1"/>
</dbReference>
<dbReference type="Gene3D" id="3.30.43.10">
    <property type="entry name" value="Uridine Diphospho-n-acetylenolpyruvylglucosamine Reductase, domain 2"/>
    <property type="match status" value="1"/>
</dbReference>
<dbReference type="InterPro" id="IPR012951">
    <property type="entry name" value="BBE"/>
</dbReference>
<dbReference type="InterPro" id="IPR016166">
    <property type="entry name" value="FAD-bd_PCMH"/>
</dbReference>
<dbReference type="InterPro" id="IPR036318">
    <property type="entry name" value="FAD-bd_PCMH-like_sf"/>
</dbReference>
<dbReference type="InterPro" id="IPR016167">
    <property type="entry name" value="FAD-bd_PCMH_sub1"/>
</dbReference>
<dbReference type="InterPro" id="IPR016169">
    <property type="entry name" value="FAD-bd_PCMH_sub2"/>
</dbReference>
<dbReference type="InterPro" id="IPR006094">
    <property type="entry name" value="Oxid_FAD_bind_N"/>
</dbReference>
<dbReference type="PANTHER" id="PTHR32448">
    <property type="entry name" value="OS08G0158400 PROTEIN"/>
    <property type="match status" value="1"/>
</dbReference>
<dbReference type="Pfam" id="PF08031">
    <property type="entry name" value="BBE"/>
    <property type="match status" value="1"/>
</dbReference>
<dbReference type="Pfam" id="PF01565">
    <property type="entry name" value="FAD_binding_4"/>
    <property type="match status" value="1"/>
</dbReference>
<dbReference type="SUPFAM" id="SSF56176">
    <property type="entry name" value="FAD-binding/transporter-associated domain-like"/>
    <property type="match status" value="1"/>
</dbReference>
<dbReference type="PROSITE" id="PS51387">
    <property type="entry name" value="FAD_PCMH"/>
    <property type="match status" value="1"/>
</dbReference>
<reference key="1">
    <citation type="journal article" date="2000" name="Nature">
        <title>Sequence and analysis of chromosome 1 of the plant Arabidopsis thaliana.</title>
        <authorList>
            <person name="Theologis A."/>
            <person name="Ecker J.R."/>
            <person name="Palm C.J."/>
            <person name="Federspiel N.A."/>
            <person name="Kaul S."/>
            <person name="White O."/>
            <person name="Alonso J."/>
            <person name="Altafi H."/>
            <person name="Araujo R."/>
            <person name="Bowman C.L."/>
            <person name="Brooks S.Y."/>
            <person name="Buehler E."/>
            <person name="Chan A."/>
            <person name="Chao Q."/>
            <person name="Chen H."/>
            <person name="Cheuk R.F."/>
            <person name="Chin C.W."/>
            <person name="Chung M.K."/>
            <person name="Conn L."/>
            <person name="Conway A.B."/>
            <person name="Conway A.R."/>
            <person name="Creasy T.H."/>
            <person name="Dewar K."/>
            <person name="Dunn P."/>
            <person name="Etgu P."/>
            <person name="Feldblyum T.V."/>
            <person name="Feng J.-D."/>
            <person name="Fong B."/>
            <person name="Fujii C.Y."/>
            <person name="Gill J.E."/>
            <person name="Goldsmith A.D."/>
            <person name="Haas B."/>
            <person name="Hansen N.F."/>
            <person name="Hughes B."/>
            <person name="Huizar L."/>
            <person name="Hunter J.L."/>
            <person name="Jenkins J."/>
            <person name="Johnson-Hopson C."/>
            <person name="Khan S."/>
            <person name="Khaykin E."/>
            <person name="Kim C.J."/>
            <person name="Koo H.L."/>
            <person name="Kremenetskaia I."/>
            <person name="Kurtz D.B."/>
            <person name="Kwan A."/>
            <person name="Lam B."/>
            <person name="Langin-Hooper S."/>
            <person name="Lee A."/>
            <person name="Lee J.M."/>
            <person name="Lenz C.A."/>
            <person name="Li J.H."/>
            <person name="Li Y.-P."/>
            <person name="Lin X."/>
            <person name="Liu S.X."/>
            <person name="Liu Z.A."/>
            <person name="Luros J.S."/>
            <person name="Maiti R."/>
            <person name="Marziali A."/>
            <person name="Militscher J."/>
            <person name="Miranda M."/>
            <person name="Nguyen M."/>
            <person name="Nierman W.C."/>
            <person name="Osborne B.I."/>
            <person name="Pai G."/>
            <person name="Peterson J."/>
            <person name="Pham P.K."/>
            <person name="Rizzo M."/>
            <person name="Rooney T."/>
            <person name="Rowley D."/>
            <person name="Sakano H."/>
            <person name="Salzberg S.L."/>
            <person name="Schwartz J.R."/>
            <person name="Shinn P."/>
            <person name="Southwick A.M."/>
            <person name="Sun H."/>
            <person name="Tallon L.J."/>
            <person name="Tambunga G."/>
            <person name="Toriumi M.J."/>
            <person name="Town C.D."/>
            <person name="Utterback T."/>
            <person name="Van Aken S."/>
            <person name="Vaysberg M."/>
            <person name="Vysotskaia V.S."/>
            <person name="Walker M."/>
            <person name="Wu D."/>
            <person name="Yu G."/>
            <person name="Fraser C.M."/>
            <person name="Venter J.C."/>
            <person name="Davis R.W."/>
        </authorList>
    </citation>
    <scope>NUCLEOTIDE SEQUENCE [LARGE SCALE GENOMIC DNA]</scope>
    <source>
        <strain>cv. Columbia</strain>
    </source>
</reference>
<reference key="2">
    <citation type="journal article" date="2017" name="Plant J.">
        <title>Araport11: a complete reannotation of the Arabidopsis thaliana reference genome.</title>
        <authorList>
            <person name="Cheng C.Y."/>
            <person name="Krishnakumar V."/>
            <person name="Chan A.P."/>
            <person name="Thibaud-Nissen F."/>
            <person name="Schobel S."/>
            <person name="Town C.D."/>
        </authorList>
    </citation>
    <scope>GENOME REANNOTATION</scope>
    <source>
        <strain>cv. Columbia</strain>
    </source>
</reference>
<reference key="3">
    <citation type="submission" date="2004-01" db="EMBL/GenBank/DDBJ databases">
        <title>Arabidopsis ORF clones.</title>
        <authorList>
            <person name="Cheuk R.F."/>
            <person name="Chen H."/>
            <person name="Kim C.J."/>
            <person name="Shinn P."/>
            <person name="Ecker J.R."/>
        </authorList>
    </citation>
    <scope>NUCLEOTIDE SEQUENCE [LARGE SCALE MRNA] OF 355-526</scope>
    <source>
        <strain>cv. Columbia</strain>
    </source>
</reference>
<reference key="4">
    <citation type="journal article" date="2015" name="J. Biol. Chem.">
        <title>Oxidation of monolignols by members of the berberine bridge enzyme family suggests a role in plant cell wall metabolism.</title>
        <authorList>
            <person name="Daniel B."/>
            <person name="Pavkov-Keller T."/>
            <person name="Steiner B."/>
            <person name="Dordic A."/>
            <person name="Gutmann A."/>
            <person name="Nidetzky B."/>
            <person name="Sensen C.W."/>
            <person name="van der Graaff E."/>
            <person name="Wallner S."/>
            <person name="Gruber K."/>
            <person name="Macheroux P."/>
        </authorList>
    </citation>
    <scope>GENE FAMILY</scope>
    <scope>NOMENCLATURE</scope>
</reference>
<comment type="cofactor">
    <cofactor evidence="1">
        <name>FAD</name>
        <dbReference type="ChEBI" id="CHEBI:57692"/>
    </cofactor>
    <text evidence="1">Binds 1 FAD per subunit in a bicovalent manner.</text>
</comment>
<comment type="subcellular location">
    <subcellularLocation>
        <location evidence="1">Secreted</location>
        <location evidence="1">Cell wall</location>
    </subcellularLocation>
</comment>
<comment type="PTM">
    <text evidence="1">The FAD cofactor is bound via a bicovalent 6-S-cysteinyl, 8alpha-N1-histidyl FAD linkage.</text>
</comment>
<comment type="similarity">
    <text evidence="6">Belongs to the oxygen-dependent FAD-linked oxidoreductase family.</text>
</comment>
<comment type="sequence caution" evidence="6">
    <conflict type="erroneous initiation">
        <sequence resource="EMBL-CDS" id="AAR24205"/>
    </conflict>
    <text>Truncated N-terminus.</text>
</comment>
<proteinExistence type="evidence at transcript level"/>
<protein>
    <recommendedName>
        <fullName evidence="5">Berberine bridge enzyme-like 11</fullName>
        <shortName evidence="5">AtBBE-like 11</shortName>
        <ecNumber evidence="1">1.1.1.-</ecNumber>
    </recommendedName>
</protein>
<name>BBE11_ARATH</name>
<gene>
    <name evidence="7" type="ordered locus">At1g30730</name>
    <name evidence="8" type="ORF">T5I8.18</name>
</gene>
<sequence>MEKLLIICMLLISVLVATSQSQTDPETFLRCLVREGSNPQVFISDVTYIPSNSSFTTVLRRRIPNLRFDKPTTPKPIAIITPTTWSHISPVLACARLFPVQVRIRSGGHDFEGLSYTSTAPFFLIDLLNFKSVDVNLTEGTAWVDTGATLGELYYKIAEKSNVLGFPAGLCTTLGVGGHISGGGYGTMMRKYGLSVDNVVGSRIIDSNGNTYFDRMSMGEELFWAVRGGGAASFGIVMGYKIRLVPVPEKVTVFSVGKTVGEGAVDLIMKWQNFSHSTDRNLFVKLTLTLVNGAKPGEKKVLATFIGMNLGGFDKTLNVMNRDFPELKLKKTDCTEMRWIDSVLFWAGYPVGTPTSVLLNPTVTKKLFMKRKSDYVKRPVSRTGLGLILKKLVELEKVEMNWNPYGGRMGEIPSSRTPFPHRGGNLFNIEYIIDWSEAGDNVEKKYLALANEFYRFMTPYVSSNPREAFLNYRDIDIGSSGNSTYEEGKIYGAKYFKDNFERLVDIKTKFDEINFWRNEQSIPVRK</sequence>
<keyword id="KW-0134">Cell wall</keyword>
<keyword id="KW-1015">Disulfide bond</keyword>
<keyword id="KW-0274">FAD</keyword>
<keyword id="KW-0285">Flavoprotein</keyword>
<keyword id="KW-0325">Glycoprotein</keyword>
<keyword id="KW-0547">Nucleotide-binding</keyword>
<keyword id="KW-0560">Oxidoreductase</keyword>
<keyword id="KW-1185">Reference proteome</keyword>
<keyword id="KW-0964">Secreted</keyword>
<keyword id="KW-0732">Signal</keyword>
<accession>Q9SA88</accession>
<accession>Q6NNH8</accession>